<comment type="function">
    <text evidence="1">Essential for intermediate filament organization in intestinal cells, interacts with intermediate filament and regulates intestinal lumen morphology.</text>
</comment>
<comment type="subcellular location">
    <subcellularLocation>
        <location evidence="2">Cell junction</location>
    </subcellularLocation>
    <subcellularLocation>
        <location evidence="2">Cytoplasm</location>
        <location evidence="2">Cytoskeleton</location>
    </subcellularLocation>
    <text evidence="2">In the intestine, localizes subapically and at cell junctions. Interacts with intermediate filament (IF) proteins and localizes to the IF network in an IF-dependent manner. In dividing cells, localizes to interpolar and kinetochore microtubules.</text>
</comment>
<comment type="similarity">
    <text evidence="5">Belongs to the UPF0184 (EST00098) family.</text>
</comment>
<proteinExistence type="inferred from homology"/>
<feature type="chain" id="PRO_0000195163" description="Bublin coiled-coil protein">
    <location>
        <begin position="1"/>
        <end position="108"/>
    </location>
</feature>
<feature type="region of interest" description="Disordered" evidence="4">
    <location>
        <begin position="1"/>
        <end position="23"/>
    </location>
</feature>
<feature type="region of interest" description="Disordered" evidence="4">
    <location>
        <begin position="67"/>
        <end position="108"/>
    </location>
</feature>
<feature type="coiled-coil region" evidence="3">
    <location>
        <begin position="25"/>
        <end position="73"/>
    </location>
</feature>
<feature type="compositionally biased region" description="Basic and acidic residues" evidence="4">
    <location>
        <begin position="99"/>
        <end position="108"/>
    </location>
</feature>
<sequence>MSGPNGDPNISVEDGLINDDDDFGSEEYEAINSMLDQINSYLDDLEERNDSLNGKLHELMESNRQARLEFRAQLSNHTPQEDSADGESKEELGGDAGWENDKKIDEGS</sequence>
<organism>
    <name type="scientific">Takifugu rubripes</name>
    <name type="common">Japanese pufferfish</name>
    <name type="synonym">Fugu rubripes</name>
    <dbReference type="NCBI Taxonomy" id="31033"/>
    <lineage>
        <taxon>Eukaryota</taxon>
        <taxon>Metazoa</taxon>
        <taxon>Chordata</taxon>
        <taxon>Craniata</taxon>
        <taxon>Vertebrata</taxon>
        <taxon>Euteleostomi</taxon>
        <taxon>Actinopterygii</taxon>
        <taxon>Neopterygii</taxon>
        <taxon>Teleostei</taxon>
        <taxon>Neoteleostei</taxon>
        <taxon>Acanthomorphata</taxon>
        <taxon>Eupercaria</taxon>
        <taxon>Tetraodontiformes</taxon>
        <taxon>Tetradontoidea</taxon>
        <taxon>Tetraodontidae</taxon>
        <taxon>Takifugu</taxon>
    </lineage>
</organism>
<gene>
    <name type="primary">bbln</name>
    <name type="ORF">EST00098</name>
</gene>
<name>BBLN_TAKRU</name>
<accession>O73881</accession>
<keyword id="KW-0965">Cell junction</keyword>
<keyword id="KW-0175">Coiled coil</keyword>
<keyword id="KW-0963">Cytoplasm</keyword>
<keyword id="KW-0206">Cytoskeleton</keyword>
<keyword id="KW-1185">Reference proteome</keyword>
<protein>
    <recommendedName>
        <fullName evidence="2">Bublin coiled-coil protein</fullName>
    </recommendedName>
    <alternativeName>
        <fullName>UPF0184 protein C9orf16 homolog</fullName>
    </alternativeName>
</protein>
<reference key="1">
    <citation type="journal article" date="1997" name="Genome Res.">
        <title>The comparative genomic structure and sequence of the surfeit gene homologs in the puffer fish Fugu rubripes and their association with CpG-rich islands.</title>
        <authorList>
            <person name="Armes N."/>
            <person name="Gilley J."/>
            <person name="Fried M."/>
        </authorList>
    </citation>
    <scope>NUCLEOTIDE SEQUENCE [GENOMIC DNA]</scope>
</reference>
<evidence type="ECO:0000250" key="1">
    <source>
        <dbReference type="UniProtKB" id="Q18012"/>
    </source>
</evidence>
<evidence type="ECO:0000250" key="2">
    <source>
        <dbReference type="UniProtKB" id="Q9BUW7"/>
    </source>
</evidence>
<evidence type="ECO:0000255" key="3"/>
<evidence type="ECO:0000256" key="4">
    <source>
        <dbReference type="SAM" id="MobiDB-lite"/>
    </source>
</evidence>
<evidence type="ECO:0000305" key="5"/>
<dbReference type="EMBL" id="Y15170">
    <property type="protein sequence ID" value="CAA75443.1"/>
    <property type="molecule type" value="Genomic_DNA"/>
</dbReference>
<dbReference type="SMR" id="O73881"/>
<dbReference type="FunCoup" id="O73881">
    <property type="interactions" value="1373"/>
</dbReference>
<dbReference type="STRING" id="31033.ENSTRUP00000082922"/>
<dbReference type="Ensembl" id="ENSTRUT00000077441.1">
    <property type="protein sequence ID" value="ENSTRUP00000082922.1"/>
    <property type="gene ID" value="ENSTRUG00000028996.1"/>
</dbReference>
<dbReference type="GeneID" id="101078463"/>
<dbReference type="KEGG" id="tru:101078463"/>
<dbReference type="CTD" id="79095"/>
<dbReference type="eggNOG" id="ENOG502SAFB">
    <property type="taxonomic scope" value="Eukaryota"/>
</dbReference>
<dbReference type="GeneTree" id="ENSGT00390000001761"/>
<dbReference type="HOGENOM" id="CLU_167244_1_0_1"/>
<dbReference type="InParanoid" id="O73881"/>
<dbReference type="OMA" id="INLMLDQ"/>
<dbReference type="OrthoDB" id="10050612at2759"/>
<dbReference type="TreeFam" id="TF324640"/>
<dbReference type="Proteomes" id="UP000005226">
    <property type="component" value="Chromosome 6"/>
</dbReference>
<dbReference type="GO" id="GO:0070161">
    <property type="term" value="C:anchoring junction"/>
    <property type="evidence" value="ECO:0007669"/>
    <property type="project" value="UniProtKB-SubCell"/>
</dbReference>
<dbReference type="GO" id="GO:0030054">
    <property type="term" value="C:cell junction"/>
    <property type="evidence" value="ECO:0000250"/>
    <property type="project" value="UniProtKB"/>
</dbReference>
<dbReference type="GO" id="GO:0005737">
    <property type="term" value="C:cytoplasm"/>
    <property type="evidence" value="ECO:0007669"/>
    <property type="project" value="UniProtKB-KW"/>
</dbReference>
<dbReference type="GO" id="GO:0005856">
    <property type="term" value="C:cytoskeleton"/>
    <property type="evidence" value="ECO:0007669"/>
    <property type="project" value="UniProtKB-SubCell"/>
</dbReference>
<dbReference type="GO" id="GO:0120219">
    <property type="term" value="C:subapical part of cell"/>
    <property type="evidence" value="ECO:0000250"/>
    <property type="project" value="UniProtKB"/>
</dbReference>
<dbReference type="GO" id="GO:0060090">
    <property type="term" value="F:molecular adaptor activity"/>
    <property type="evidence" value="ECO:0000250"/>
    <property type="project" value="UniProtKB"/>
</dbReference>
<dbReference type="GO" id="GO:0045110">
    <property type="term" value="P:intermediate filament bundle assembly"/>
    <property type="evidence" value="ECO:0000250"/>
    <property type="project" value="UniProtKB"/>
</dbReference>
<dbReference type="InterPro" id="IPR005374">
    <property type="entry name" value="BBLN_eukaryota"/>
</dbReference>
<dbReference type="PANTHER" id="PTHR34344:SF1">
    <property type="entry name" value="BUBLIN COILED-COIL PROTEIN"/>
    <property type="match status" value="1"/>
</dbReference>
<dbReference type="PANTHER" id="PTHR34344">
    <property type="entry name" value="UPF0184 PROTEIN C9ORF16"/>
    <property type="match status" value="1"/>
</dbReference>
<dbReference type="Pfam" id="PF03670">
    <property type="entry name" value="UPF0184"/>
    <property type="match status" value="1"/>
</dbReference>